<protein>
    <recommendedName>
        <fullName evidence="1">Serine--tRNA ligase</fullName>
        <ecNumber evidence="1">6.1.1.11</ecNumber>
    </recommendedName>
    <alternativeName>
        <fullName evidence="1">Seryl-tRNA synthetase</fullName>
        <shortName evidence="1">SerRS</shortName>
    </alternativeName>
    <alternativeName>
        <fullName evidence="1">Seryl-tRNA(Ser/Sec) synthetase</fullName>
    </alternativeName>
</protein>
<name>SYS_METFK</name>
<organism>
    <name type="scientific">Methylobacillus flagellatus (strain ATCC 51484 / DSM 6875 / VKM B-1610 / KT)</name>
    <dbReference type="NCBI Taxonomy" id="265072"/>
    <lineage>
        <taxon>Bacteria</taxon>
        <taxon>Pseudomonadati</taxon>
        <taxon>Pseudomonadota</taxon>
        <taxon>Betaproteobacteria</taxon>
        <taxon>Nitrosomonadales</taxon>
        <taxon>Methylophilaceae</taxon>
        <taxon>Methylobacillus</taxon>
    </lineage>
</organism>
<reference key="1">
    <citation type="submission" date="2006-03" db="EMBL/GenBank/DDBJ databases">
        <title>Complete sequence of Methylobacillus flagellatus KT.</title>
        <authorList>
            <consortium name="US DOE Joint Genome Institute"/>
            <person name="Copeland A."/>
            <person name="Lucas S."/>
            <person name="Lapidus A."/>
            <person name="Barry K."/>
            <person name="Detter J.C."/>
            <person name="Glavina del Rio T."/>
            <person name="Hammon N."/>
            <person name="Israni S."/>
            <person name="Dalin E."/>
            <person name="Tice H."/>
            <person name="Pitluck S."/>
            <person name="Brettin T."/>
            <person name="Bruce D."/>
            <person name="Han C."/>
            <person name="Tapia R."/>
            <person name="Saunders E."/>
            <person name="Gilna P."/>
            <person name="Schmutz J."/>
            <person name="Larimer F."/>
            <person name="Land M."/>
            <person name="Kyrpides N."/>
            <person name="Anderson I."/>
            <person name="Richardson P."/>
        </authorList>
    </citation>
    <scope>NUCLEOTIDE SEQUENCE [LARGE SCALE GENOMIC DNA]</scope>
    <source>
        <strain>ATCC 51484 / DSM 6875 / VKM B-1610 / KT</strain>
    </source>
</reference>
<dbReference type="EC" id="6.1.1.11" evidence="1"/>
<dbReference type="EMBL" id="CP000284">
    <property type="protein sequence ID" value="ABE49397.1"/>
    <property type="molecule type" value="Genomic_DNA"/>
</dbReference>
<dbReference type="RefSeq" id="WP_011479351.1">
    <property type="nucleotide sequence ID" value="NC_007947.1"/>
</dbReference>
<dbReference type="SMR" id="Q1H290"/>
<dbReference type="STRING" id="265072.Mfla_1129"/>
<dbReference type="KEGG" id="mfa:Mfla_1129"/>
<dbReference type="eggNOG" id="COG0172">
    <property type="taxonomic scope" value="Bacteria"/>
</dbReference>
<dbReference type="HOGENOM" id="CLU_023797_1_1_4"/>
<dbReference type="OrthoDB" id="9804647at2"/>
<dbReference type="UniPathway" id="UPA00906">
    <property type="reaction ID" value="UER00895"/>
</dbReference>
<dbReference type="Proteomes" id="UP000002440">
    <property type="component" value="Chromosome"/>
</dbReference>
<dbReference type="GO" id="GO:0005737">
    <property type="term" value="C:cytoplasm"/>
    <property type="evidence" value="ECO:0007669"/>
    <property type="project" value="UniProtKB-SubCell"/>
</dbReference>
<dbReference type="GO" id="GO:0005524">
    <property type="term" value="F:ATP binding"/>
    <property type="evidence" value="ECO:0007669"/>
    <property type="project" value="UniProtKB-UniRule"/>
</dbReference>
<dbReference type="GO" id="GO:0004828">
    <property type="term" value="F:serine-tRNA ligase activity"/>
    <property type="evidence" value="ECO:0007669"/>
    <property type="project" value="UniProtKB-UniRule"/>
</dbReference>
<dbReference type="GO" id="GO:0016260">
    <property type="term" value="P:selenocysteine biosynthetic process"/>
    <property type="evidence" value="ECO:0007669"/>
    <property type="project" value="UniProtKB-UniRule"/>
</dbReference>
<dbReference type="GO" id="GO:0006434">
    <property type="term" value="P:seryl-tRNA aminoacylation"/>
    <property type="evidence" value="ECO:0007669"/>
    <property type="project" value="UniProtKB-UniRule"/>
</dbReference>
<dbReference type="CDD" id="cd00770">
    <property type="entry name" value="SerRS_core"/>
    <property type="match status" value="1"/>
</dbReference>
<dbReference type="Gene3D" id="3.30.930.10">
    <property type="entry name" value="Bira Bifunctional Protein, Domain 2"/>
    <property type="match status" value="1"/>
</dbReference>
<dbReference type="Gene3D" id="1.10.287.40">
    <property type="entry name" value="Serine-tRNA synthetase, tRNA binding domain"/>
    <property type="match status" value="1"/>
</dbReference>
<dbReference type="HAMAP" id="MF_00176">
    <property type="entry name" value="Ser_tRNA_synth_type1"/>
    <property type="match status" value="1"/>
</dbReference>
<dbReference type="InterPro" id="IPR002314">
    <property type="entry name" value="aa-tRNA-synt_IIb"/>
</dbReference>
<dbReference type="InterPro" id="IPR006195">
    <property type="entry name" value="aa-tRNA-synth_II"/>
</dbReference>
<dbReference type="InterPro" id="IPR045864">
    <property type="entry name" value="aa-tRNA-synth_II/BPL/LPL"/>
</dbReference>
<dbReference type="InterPro" id="IPR002317">
    <property type="entry name" value="Ser-tRNA-ligase_type_1"/>
</dbReference>
<dbReference type="InterPro" id="IPR015866">
    <property type="entry name" value="Ser-tRNA-synth_1_N"/>
</dbReference>
<dbReference type="InterPro" id="IPR042103">
    <property type="entry name" value="SerRS_1_N_sf"/>
</dbReference>
<dbReference type="InterPro" id="IPR033729">
    <property type="entry name" value="SerRS_core"/>
</dbReference>
<dbReference type="InterPro" id="IPR010978">
    <property type="entry name" value="tRNA-bd_arm"/>
</dbReference>
<dbReference type="NCBIfam" id="TIGR00414">
    <property type="entry name" value="serS"/>
    <property type="match status" value="1"/>
</dbReference>
<dbReference type="PANTHER" id="PTHR43697:SF1">
    <property type="entry name" value="SERINE--TRNA LIGASE"/>
    <property type="match status" value="1"/>
</dbReference>
<dbReference type="PANTHER" id="PTHR43697">
    <property type="entry name" value="SERYL-TRNA SYNTHETASE"/>
    <property type="match status" value="1"/>
</dbReference>
<dbReference type="Pfam" id="PF02403">
    <property type="entry name" value="Seryl_tRNA_N"/>
    <property type="match status" value="1"/>
</dbReference>
<dbReference type="Pfam" id="PF00587">
    <property type="entry name" value="tRNA-synt_2b"/>
    <property type="match status" value="1"/>
</dbReference>
<dbReference type="PIRSF" id="PIRSF001529">
    <property type="entry name" value="Ser-tRNA-synth_IIa"/>
    <property type="match status" value="1"/>
</dbReference>
<dbReference type="PRINTS" id="PR00981">
    <property type="entry name" value="TRNASYNTHSER"/>
</dbReference>
<dbReference type="SUPFAM" id="SSF55681">
    <property type="entry name" value="Class II aaRS and biotin synthetases"/>
    <property type="match status" value="1"/>
</dbReference>
<dbReference type="SUPFAM" id="SSF46589">
    <property type="entry name" value="tRNA-binding arm"/>
    <property type="match status" value="1"/>
</dbReference>
<dbReference type="PROSITE" id="PS50862">
    <property type="entry name" value="AA_TRNA_LIGASE_II"/>
    <property type="match status" value="1"/>
</dbReference>
<comment type="function">
    <text evidence="1">Catalyzes the attachment of serine to tRNA(Ser). Is also able to aminoacylate tRNA(Sec) with serine, to form the misacylated tRNA L-seryl-tRNA(Sec), which will be further converted into selenocysteinyl-tRNA(Sec).</text>
</comment>
<comment type="catalytic activity">
    <reaction evidence="1">
        <text>tRNA(Ser) + L-serine + ATP = L-seryl-tRNA(Ser) + AMP + diphosphate + H(+)</text>
        <dbReference type="Rhea" id="RHEA:12292"/>
        <dbReference type="Rhea" id="RHEA-COMP:9669"/>
        <dbReference type="Rhea" id="RHEA-COMP:9703"/>
        <dbReference type="ChEBI" id="CHEBI:15378"/>
        <dbReference type="ChEBI" id="CHEBI:30616"/>
        <dbReference type="ChEBI" id="CHEBI:33019"/>
        <dbReference type="ChEBI" id="CHEBI:33384"/>
        <dbReference type="ChEBI" id="CHEBI:78442"/>
        <dbReference type="ChEBI" id="CHEBI:78533"/>
        <dbReference type="ChEBI" id="CHEBI:456215"/>
        <dbReference type="EC" id="6.1.1.11"/>
    </reaction>
</comment>
<comment type="catalytic activity">
    <reaction evidence="1">
        <text>tRNA(Sec) + L-serine + ATP = L-seryl-tRNA(Sec) + AMP + diphosphate + H(+)</text>
        <dbReference type="Rhea" id="RHEA:42580"/>
        <dbReference type="Rhea" id="RHEA-COMP:9742"/>
        <dbReference type="Rhea" id="RHEA-COMP:10128"/>
        <dbReference type="ChEBI" id="CHEBI:15378"/>
        <dbReference type="ChEBI" id="CHEBI:30616"/>
        <dbReference type="ChEBI" id="CHEBI:33019"/>
        <dbReference type="ChEBI" id="CHEBI:33384"/>
        <dbReference type="ChEBI" id="CHEBI:78442"/>
        <dbReference type="ChEBI" id="CHEBI:78533"/>
        <dbReference type="ChEBI" id="CHEBI:456215"/>
        <dbReference type="EC" id="6.1.1.11"/>
    </reaction>
</comment>
<comment type="pathway">
    <text evidence="1">Aminoacyl-tRNA biosynthesis; selenocysteinyl-tRNA(Sec) biosynthesis; L-seryl-tRNA(Sec) from L-serine and tRNA(Sec): step 1/1.</text>
</comment>
<comment type="subunit">
    <text evidence="1">Homodimer. The tRNA molecule binds across the dimer.</text>
</comment>
<comment type="subcellular location">
    <subcellularLocation>
        <location evidence="1">Cytoplasm</location>
    </subcellularLocation>
</comment>
<comment type="domain">
    <text evidence="1">Consists of two distinct domains, a catalytic core and a N-terminal extension that is involved in tRNA binding.</text>
</comment>
<comment type="similarity">
    <text evidence="1">Belongs to the class-II aminoacyl-tRNA synthetase family. Type-1 seryl-tRNA synthetase subfamily.</text>
</comment>
<proteinExistence type="inferred from homology"/>
<accession>Q1H290</accession>
<sequence length="432" mass="47737">MLDIQQLRNDLDNVVARLSSRGFAFDINAFIALENERKTVQTRTQDLQAKRNATSKQIGIAKSRGEDVASIMAEVAGLGAQLKEGEERLAAIQAELQQLLLSVPNLPHESVPVGKSEEDNVEVRRVGTPRRFDFDVKDHTDIGTPLGLDFDTGAKLAGARFTLMRGQIARLHRALAQFMLDTQTEQHGYTECYTPYIVNADSLRGTGQLPKFEADLFAAQKGGQEGESNEAFYLIPTSEVTLTNTVRDEIVPLDSLPIKLTAHTPCFRSEAGSYGRDTRGMIRQHQFDKVEMVQITHPERSYDALEEMVGHAEHVLQALGLPYRVVLLCTGDMGFGAAKTYDLEVWLPAQNTYREISSVSNCEAFQARRLQARFRNENGKPELLHTLNGSGLAVGRTLVAVLENNQQADGSVVVPEVLRPYMGGLTVISAQQ</sequence>
<evidence type="ECO:0000255" key="1">
    <source>
        <dbReference type="HAMAP-Rule" id="MF_00176"/>
    </source>
</evidence>
<gene>
    <name evidence="1" type="primary">serS</name>
    <name type="ordered locus">Mfla_1129</name>
</gene>
<keyword id="KW-0030">Aminoacyl-tRNA synthetase</keyword>
<keyword id="KW-0067">ATP-binding</keyword>
<keyword id="KW-0963">Cytoplasm</keyword>
<keyword id="KW-0436">Ligase</keyword>
<keyword id="KW-0547">Nucleotide-binding</keyword>
<keyword id="KW-0648">Protein biosynthesis</keyword>
<keyword id="KW-1185">Reference proteome</keyword>
<feature type="chain" id="PRO_1000019727" description="Serine--tRNA ligase">
    <location>
        <begin position="1"/>
        <end position="432"/>
    </location>
</feature>
<feature type="binding site" evidence="1">
    <location>
        <begin position="237"/>
        <end position="239"/>
    </location>
    <ligand>
        <name>L-serine</name>
        <dbReference type="ChEBI" id="CHEBI:33384"/>
    </ligand>
</feature>
<feature type="binding site" evidence="1">
    <location>
        <begin position="268"/>
        <end position="270"/>
    </location>
    <ligand>
        <name>ATP</name>
        <dbReference type="ChEBI" id="CHEBI:30616"/>
    </ligand>
</feature>
<feature type="binding site" evidence="1">
    <location>
        <position position="291"/>
    </location>
    <ligand>
        <name>L-serine</name>
        <dbReference type="ChEBI" id="CHEBI:33384"/>
    </ligand>
</feature>
<feature type="binding site" evidence="1">
    <location>
        <begin position="355"/>
        <end position="358"/>
    </location>
    <ligand>
        <name>ATP</name>
        <dbReference type="ChEBI" id="CHEBI:30616"/>
    </ligand>
</feature>
<feature type="binding site" evidence="1">
    <location>
        <position position="390"/>
    </location>
    <ligand>
        <name>L-serine</name>
        <dbReference type="ChEBI" id="CHEBI:33384"/>
    </ligand>
</feature>